<dbReference type="EMBL" id="AJ237669">
    <property type="protein sequence ID" value="CAC20862.1"/>
    <property type="molecule type" value="mRNA"/>
</dbReference>
<dbReference type="EMBL" id="BC078818">
    <property type="protein sequence ID" value="AAH78818.1"/>
    <property type="molecule type" value="mRNA"/>
</dbReference>
<dbReference type="RefSeq" id="NP_073636.1">
    <property type="nucleotide sequence ID" value="NM_022799.2"/>
</dbReference>
<dbReference type="FunCoup" id="Q9EPJ0">
    <property type="interactions" value="2592"/>
</dbReference>
<dbReference type="STRING" id="10116.ENSRNOP00000065540"/>
<dbReference type="iPTMnet" id="Q9EPJ0"/>
<dbReference type="PhosphoSitePlus" id="Q9EPJ0"/>
<dbReference type="PaxDb" id="10116-ENSRNOP00000065540"/>
<dbReference type="Ensembl" id="ENSRNOT00000112895.1">
    <property type="protein sequence ID" value="ENSRNOP00000076606.1"/>
    <property type="gene ID" value="ENSRNOG00000047287.3"/>
</dbReference>
<dbReference type="GeneID" id="64709"/>
<dbReference type="KEGG" id="rno:64709"/>
<dbReference type="UCSC" id="RGD:620993">
    <property type="organism name" value="rat"/>
</dbReference>
<dbReference type="AGR" id="RGD:620993"/>
<dbReference type="CTD" id="64710"/>
<dbReference type="RGD" id="620993">
    <property type="gene designation" value="Nucks1"/>
</dbReference>
<dbReference type="eggNOG" id="ENOG502R8NJ">
    <property type="taxonomic scope" value="Eukaryota"/>
</dbReference>
<dbReference type="GeneTree" id="ENSGT00940000153414"/>
<dbReference type="HOGENOM" id="CLU_067355_0_1_1"/>
<dbReference type="InParanoid" id="Q9EPJ0"/>
<dbReference type="OrthoDB" id="92348at9989"/>
<dbReference type="PhylomeDB" id="Q9EPJ0"/>
<dbReference type="PRO" id="PR:Q9EPJ0"/>
<dbReference type="Proteomes" id="UP000002494">
    <property type="component" value="Chromosome 13"/>
</dbReference>
<dbReference type="Bgee" id="ENSRNOG00000047287">
    <property type="expression patterns" value="Expressed in thymus and 19 other cell types or tissues"/>
</dbReference>
<dbReference type="ExpressionAtlas" id="Q9EPJ0">
    <property type="expression patterns" value="baseline and differential"/>
</dbReference>
<dbReference type="GO" id="GO:0000785">
    <property type="term" value="C:chromatin"/>
    <property type="evidence" value="ECO:0000266"/>
    <property type="project" value="RGD"/>
</dbReference>
<dbReference type="GO" id="GO:0005737">
    <property type="term" value="C:cytoplasm"/>
    <property type="evidence" value="ECO:0000266"/>
    <property type="project" value="RGD"/>
</dbReference>
<dbReference type="GO" id="GO:0005634">
    <property type="term" value="C:nucleus"/>
    <property type="evidence" value="ECO:0000266"/>
    <property type="project" value="RGD"/>
</dbReference>
<dbReference type="GO" id="GO:0003682">
    <property type="term" value="F:chromatin binding"/>
    <property type="evidence" value="ECO:0000266"/>
    <property type="project" value="RGD"/>
</dbReference>
<dbReference type="GO" id="GO:0140297">
    <property type="term" value="F:DNA-binding transcription factor binding"/>
    <property type="evidence" value="ECO:0000266"/>
    <property type="project" value="RGD"/>
</dbReference>
<dbReference type="GO" id="GO:0003690">
    <property type="term" value="F:double-stranded DNA binding"/>
    <property type="evidence" value="ECO:0000266"/>
    <property type="project" value="RGD"/>
</dbReference>
<dbReference type="GO" id="GO:0003697">
    <property type="term" value="F:single-stranded DNA binding"/>
    <property type="evidence" value="ECO:0000314"/>
    <property type="project" value="ParkinsonsUK-UCL"/>
</dbReference>
<dbReference type="GO" id="GO:0003713">
    <property type="term" value="F:transcription coactivator activity"/>
    <property type="evidence" value="ECO:0000266"/>
    <property type="project" value="RGD"/>
</dbReference>
<dbReference type="GO" id="GO:0071481">
    <property type="term" value="P:cellular response to X-ray"/>
    <property type="evidence" value="ECO:0000266"/>
    <property type="project" value="RGD"/>
</dbReference>
<dbReference type="GO" id="GO:0006325">
    <property type="term" value="P:chromatin organization"/>
    <property type="evidence" value="ECO:0000266"/>
    <property type="project" value="RGD"/>
</dbReference>
<dbReference type="GO" id="GO:0000724">
    <property type="term" value="P:double-strand break repair via homologous recombination"/>
    <property type="evidence" value="ECO:0000266"/>
    <property type="project" value="RGD"/>
</dbReference>
<dbReference type="GO" id="GO:0042593">
    <property type="term" value="P:glucose homeostasis"/>
    <property type="evidence" value="ECO:0000266"/>
    <property type="project" value="RGD"/>
</dbReference>
<dbReference type="GO" id="GO:0036297">
    <property type="term" value="P:interstrand cross-link repair"/>
    <property type="evidence" value="ECO:0000266"/>
    <property type="project" value="RGD"/>
</dbReference>
<dbReference type="GO" id="GO:0001678">
    <property type="term" value="P:intracellular glucose homeostasis"/>
    <property type="evidence" value="ECO:0000266"/>
    <property type="project" value="RGD"/>
</dbReference>
<dbReference type="GO" id="GO:0046628">
    <property type="term" value="P:positive regulation of insulin receptor signaling pathway"/>
    <property type="evidence" value="ECO:0000266"/>
    <property type="project" value="RGD"/>
</dbReference>
<dbReference type="GO" id="GO:0045944">
    <property type="term" value="P:positive regulation of transcription by RNA polymerase II"/>
    <property type="evidence" value="ECO:0000266"/>
    <property type="project" value="RGD"/>
</dbReference>
<dbReference type="GO" id="GO:0006275">
    <property type="term" value="P:regulation of DNA replication"/>
    <property type="evidence" value="ECO:0000266"/>
    <property type="project" value="RGD"/>
</dbReference>
<dbReference type="GO" id="GO:0060382">
    <property type="term" value="P:regulation of DNA strand elongation"/>
    <property type="evidence" value="ECO:0000266"/>
    <property type="project" value="RGD"/>
</dbReference>
<dbReference type="GO" id="GO:0046626">
    <property type="term" value="P:regulation of insulin receptor signaling pathway"/>
    <property type="evidence" value="ECO:0000266"/>
    <property type="project" value="RGD"/>
</dbReference>
<dbReference type="GO" id="GO:0031297">
    <property type="term" value="P:replication fork processing"/>
    <property type="evidence" value="ECO:0000266"/>
    <property type="project" value="RGD"/>
</dbReference>
<dbReference type="InterPro" id="IPR052003">
    <property type="entry name" value="HR_DNA-Binding_Protein"/>
</dbReference>
<dbReference type="PANTHER" id="PTHR15361:SF1">
    <property type="entry name" value="NUCLEAR UBIQUITOUS CASEIN AND CYCLIN-DEPENDENT KINASE SUBSTRATE 1"/>
    <property type="match status" value="1"/>
</dbReference>
<dbReference type="PANTHER" id="PTHR15361">
    <property type="entry name" value="RAD51/NUKS-INTERACTING PROTEIN"/>
    <property type="match status" value="1"/>
</dbReference>
<proteinExistence type="evidence at protein level"/>
<sequence>MSRPVRNRKVVDYSQFQESDDADEDYGRDSGPPAKKIRSSPREAKNKRRSGKNSQEDSEDSEEKDVKTKKDDSHSAEDSEDEKDDHKSVRQQRQAASKAASKQREMLLEDVGSEEEPEEDDEAPFQEKDSGSDEDFLMEDDDDSDYGSSKKKNKKMVKKSKPERKEKKMPKPRLKATVTPSPVKGKGKVGRPTASKTSKEKTPSPKEEDEEAESPPEKKTSASPPLEKSGDEGSEDEAASGED</sequence>
<accession>Q9EPJ0</accession>
<protein>
    <recommendedName>
        <fullName evidence="4">Nuclear ubiquitous casein and cyclin-dependent kinase substrate 1</fullName>
    </recommendedName>
</protein>
<gene>
    <name evidence="5" type="primary">Nucks1</name>
    <name evidence="4" type="synonym">Nucks</name>
</gene>
<name>NUCKS_RAT</name>
<evidence type="ECO:0000250" key="1">
    <source>
        <dbReference type="UniProtKB" id="Q80XU3"/>
    </source>
</evidence>
<evidence type="ECO:0000250" key="2">
    <source>
        <dbReference type="UniProtKB" id="Q9H1E3"/>
    </source>
</evidence>
<evidence type="ECO:0000256" key="3">
    <source>
        <dbReference type="SAM" id="MobiDB-lite"/>
    </source>
</evidence>
<evidence type="ECO:0000303" key="4">
    <source>
    </source>
</evidence>
<evidence type="ECO:0000312" key="5">
    <source>
        <dbReference type="RGD" id="620993"/>
    </source>
</evidence>
<evidence type="ECO:0007744" key="6">
    <source>
    </source>
</evidence>
<evidence type="ECO:0007744" key="7">
    <source>
    </source>
</evidence>
<comment type="function">
    <text evidence="2">Chromatin-associated protein involved in DNA repair by promoting homologous recombination (HR). Binds double-stranded DNA (dsDNA) and secondary DNA structures, such as D-loop structures, but with less affinity than RAD51AP1.</text>
</comment>
<comment type="subunit">
    <text evidence="2">Does not interact with RAD51.</text>
</comment>
<comment type="subcellular location">
    <subcellularLocation>
        <location evidence="2">Nucleus</location>
    </subcellularLocation>
    <subcellularLocation>
        <location evidence="2">Chromosome</location>
    </subcellularLocation>
</comment>
<comment type="PTM">
    <text evidence="2">Phosphorylated in an ATM-dependent manner in response to DNA damage. Phosphorylated by CDK1 and casein kinase.</text>
</comment>
<keyword id="KW-0158">Chromosome</keyword>
<keyword id="KW-0227">DNA damage</keyword>
<keyword id="KW-0234">DNA repair</keyword>
<keyword id="KW-0539">Nucleus</keyword>
<keyword id="KW-0597">Phosphoprotein</keyword>
<keyword id="KW-1185">Reference proteome</keyword>
<organism>
    <name type="scientific">Rattus norvegicus</name>
    <name type="common">Rat</name>
    <dbReference type="NCBI Taxonomy" id="10116"/>
    <lineage>
        <taxon>Eukaryota</taxon>
        <taxon>Metazoa</taxon>
        <taxon>Chordata</taxon>
        <taxon>Craniata</taxon>
        <taxon>Vertebrata</taxon>
        <taxon>Euteleostomi</taxon>
        <taxon>Mammalia</taxon>
        <taxon>Eutheria</taxon>
        <taxon>Euarchontoglires</taxon>
        <taxon>Glires</taxon>
        <taxon>Rodentia</taxon>
        <taxon>Myomorpha</taxon>
        <taxon>Muroidea</taxon>
        <taxon>Muridae</taxon>
        <taxon>Murinae</taxon>
        <taxon>Rattus</taxon>
    </lineage>
</organism>
<feature type="chain" id="PRO_0000057980" description="Nuclear ubiquitous casein and cyclin-dependent kinase substrate 1">
    <location>
        <begin position="1"/>
        <end position="243"/>
    </location>
</feature>
<feature type="region of interest" description="Disordered" evidence="3">
    <location>
        <begin position="1"/>
        <end position="243"/>
    </location>
</feature>
<feature type="compositionally biased region" description="Basic residues" evidence="3">
    <location>
        <begin position="35"/>
        <end position="51"/>
    </location>
</feature>
<feature type="compositionally biased region" description="Basic and acidic residues" evidence="3">
    <location>
        <begin position="64"/>
        <end position="77"/>
    </location>
</feature>
<feature type="compositionally biased region" description="Low complexity" evidence="3">
    <location>
        <begin position="91"/>
        <end position="100"/>
    </location>
</feature>
<feature type="compositionally biased region" description="Acidic residues" evidence="3">
    <location>
        <begin position="111"/>
        <end position="124"/>
    </location>
</feature>
<feature type="compositionally biased region" description="Acidic residues" evidence="3">
    <location>
        <begin position="132"/>
        <end position="145"/>
    </location>
</feature>
<feature type="compositionally biased region" description="Basic residues" evidence="3">
    <location>
        <begin position="149"/>
        <end position="174"/>
    </location>
</feature>
<feature type="compositionally biased region" description="Basic and acidic residues" evidence="3">
    <location>
        <begin position="197"/>
        <end position="206"/>
    </location>
</feature>
<feature type="compositionally biased region" description="Acidic residues" evidence="3">
    <location>
        <begin position="232"/>
        <end position="243"/>
    </location>
</feature>
<feature type="modified residue" description="Phosphotyrosine" evidence="1">
    <location>
        <position position="13"/>
    </location>
</feature>
<feature type="modified residue" description="Phosphoserine" evidence="2">
    <location>
        <position position="14"/>
    </location>
</feature>
<feature type="modified residue" description="Phosphoserine" evidence="6 7">
    <location>
        <position position="19"/>
    </location>
</feature>
<feature type="modified residue" description="Phosphotyrosine" evidence="2">
    <location>
        <position position="26"/>
    </location>
</feature>
<feature type="modified residue" description="Phosphoserine" evidence="2">
    <location>
        <position position="54"/>
    </location>
</feature>
<feature type="modified residue" description="Phosphoserine" evidence="7">
    <location>
        <position position="58"/>
    </location>
</feature>
<feature type="modified residue" description="Phosphoserine" evidence="7">
    <location>
        <position position="61"/>
    </location>
</feature>
<feature type="modified residue" description="Phosphoserine" evidence="7">
    <location>
        <position position="73"/>
    </location>
</feature>
<feature type="modified residue" description="Phosphoserine" evidence="7">
    <location>
        <position position="75"/>
    </location>
</feature>
<feature type="modified residue" description="Phosphoserine" evidence="7">
    <location>
        <position position="79"/>
    </location>
</feature>
<feature type="modified residue" description="Phosphoserine" evidence="7">
    <location>
        <position position="113"/>
    </location>
</feature>
<feature type="modified residue" description="Phosphoserine" evidence="7">
    <location>
        <position position="130"/>
    </location>
</feature>
<feature type="modified residue" description="Phosphoserine" evidence="7">
    <location>
        <position position="132"/>
    </location>
</feature>
<feature type="modified residue" description="Phosphoserine" evidence="7">
    <location>
        <position position="144"/>
    </location>
</feature>
<feature type="modified residue" description="Phosphothreonine" evidence="2">
    <location>
        <position position="179"/>
    </location>
</feature>
<feature type="modified residue" description="Phosphoserine" evidence="7">
    <location>
        <position position="181"/>
    </location>
</feature>
<feature type="modified residue" description="Phosphothreonine" evidence="2">
    <location>
        <position position="202"/>
    </location>
</feature>
<feature type="modified residue" description="Phosphoserine" evidence="7">
    <location>
        <position position="204"/>
    </location>
</feature>
<feature type="modified residue" description="Phosphoserine" evidence="6 7">
    <location>
        <position position="214"/>
    </location>
</feature>
<feature type="modified residue" description="Phosphoserine" evidence="7">
    <location>
        <position position="223"/>
    </location>
</feature>
<feature type="modified residue" description="Phosphoserine" evidence="7">
    <location>
        <position position="229"/>
    </location>
</feature>
<feature type="modified residue" description="Phosphoserine" evidence="7">
    <location>
        <position position="234"/>
    </location>
</feature>
<feature type="modified residue" description="Phosphoserine" evidence="7">
    <location>
        <position position="240"/>
    </location>
</feature>
<reference key="1">
    <citation type="journal article" date="2001" name="Eur. J. Biochem.">
        <title>Molecular cloning of a mammalian nuclear phosphoprotein NUCKS, which serves as a substrate for Cdk1 in vivo.</title>
        <authorList>
            <person name="Oestvold A.C."/>
            <person name="Norum J.H."/>
            <person name="Mathiesen S."/>
            <person name="Wanvik B."/>
            <person name="Sefland I."/>
            <person name="Grundt K."/>
        </authorList>
    </citation>
    <scope>NUCLEOTIDE SEQUENCE [MRNA]</scope>
    <source>
        <strain>Sprague-Dawley</strain>
        <tissue>Brain</tissue>
    </source>
</reference>
<reference key="2">
    <citation type="journal article" date="2004" name="Genome Res.">
        <title>The status, quality, and expansion of the NIH full-length cDNA project: the Mammalian Gene Collection (MGC).</title>
        <authorList>
            <consortium name="The MGC Project Team"/>
        </authorList>
    </citation>
    <scope>NUCLEOTIDE SEQUENCE [LARGE SCALE MRNA]</scope>
    <source>
        <tissue>Kidney</tissue>
    </source>
</reference>
<reference key="3">
    <citation type="journal article" date="2006" name="Proc. Natl. Acad. Sci. U.S.A.">
        <title>Quantitative phosphoproteomics of vasopressin-sensitive renal cells: regulation of aquaporin-2 phosphorylation at two sites.</title>
        <authorList>
            <person name="Hoffert J.D."/>
            <person name="Pisitkun T."/>
            <person name="Wang G."/>
            <person name="Shen R.-F."/>
            <person name="Knepper M.A."/>
        </authorList>
    </citation>
    <scope>PHOSPHORYLATION [LARGE SCALE ANALYSIS] AT SER-19 AND SER-214</scope>
    <scope>IDENTIFICATION BY MASS SPECTROMETRY [LARGE SCALE ANALYSIS]</scope>
</reference>
<reference key="4">
    <citation type="journal article" date="2012" name="Nat. Commun.">
        <title>Quantitative maps of protein phosphorylation sites across 14 different rat organs and tissues.</title>
        <authorList>
            <person name="Lundby A."/>
            <person name="Secher A."/>
            <person name="Lage K."/>
            <person name="Nordsborg N.B."/>
            <person name="Dmytriyev A."/>
            <person name="Lundby C."/>
            <person name="Olsen J.V."/>
        </authorList>
    </citation>
    <scope>PHOSPHORYLATION [LARGE SCALE ANALYSIS] AT SER-19; SER-58; SER-61; SER-73; SER-75; SER-79; SER-113; SER-130; SER-132; SER-144; SER-181; SER-204; SER-214; SER-223; SER-229; SER-234 AND SER-240</scope>
    <scope>IDENTIFICATION BY MASS SPECTROMETRY [LARGE SCALE ANALYSIS]</scope>
</reference>